<organism>
    <name type="scientific">Buchnera aphidicola subsp. Schizaphis graminum (strain Sg)</name>
    <dbReference type="NCBI Taxonomy" id="198804"/>
    <lineage>
        <taxon>Bacteria</taxon>
        <taxon>Pseudomonadati</taxon>
        <taxon>Pseudomonadota</taxon>
        <taxon>Gammaproteobacteria</taxon>
        <taxon>Enterobacterales</taxon>
        <taxon>Erwiniaceae</taxon>
        <taxon>Buchnera</taxon>
    </lineage>
</organism>
<proteinExistence type="inferred from homology"/>
<feature type="chain" id="PRO_0000109154" description="UDP-N-acetylglucosamine--N-acetylmuramyl-(pentapeptide) pyrophosphoryl-undecaprenol N-acetylglucosamine transferase">
    <location>
        <begin position="1"/>
        <end position="354"/>
    </location>
</feature>
<feature type="binding site" evidence="1">
    <location>
        <begin position="13"/>
        <end position="15"/>
    </location>
    <ligand>
        <name>UDP-N-acetyl-alpha-D-glucosamine</name>
        <dbReference type="ChEBI" id="CHEBI:57705"/>
    </ligand>
</feature>
<feature type="binding site" evidence="1">
    <location>
        <position position="125"/>
    </location>
    <ligand>
        <name>UDP-N-acetyl-alpha-D-glucosamine</name>
        <dbReference type="ChEBI" id="CHEBI:57705"/>
    </ligand>
</feature>
<feature type="binding site" evidence="1">
    <location>
        <position position="161"/>
    </location>
    <ligand>
        <name>UDP-N-acetyl-alpha-D-glucosamine</name>
        <dbReference type="ChEBI" id="CHEBI:57705"/>
    </ligand>
</feature>
<feature type="binding site" evidence="1">
    <location>
        <position position="189"/>
    </location>
    <ligand>
        <name>UDP-N-acetyl-alpha-D-glucosamine</name>
        <dbReference type="ChEBI" id="CHEBI:57705"/>
    </ligand>
</feature>
<feature type="binding site" evidence="1">
    <location>
        <position position="242"/>
    </location>
    <ligand>
        <name>UDP-N-acetyl-alpha-D-glucosamine</name>
        <dbReference type="ChEBI" id="CHEBI:57705"/>
    </ligand>
</feature>
<feature type="binding site" evidence="1">
    <location>
        <begin position="261"/>
        <end position="266"/>
    </location>
    <ligand>
        <name>UDP-N-acetyl-alpha-D-glucosamine</name>
        <dbReference type="ChEBI" id="CHEBI:57705"/>
    </ligand>
</feature>
<feature type="binding site" evidence="1">
    <location>
        <position position="286"/>
    </location>
    <ligand>
        <name>UDP-N-acetyl-alpha-D-glucosamine</name>
        <dbReference type="ChEBI" id="CHEBI:57705"/>
    </ligand>
</feature>
<gene>
    <name evidence="1" type="primary">murG</name>
    <name type="ordered locus">BUsg_210</name>
</gene>
<dbReference type="EC" id="2.4.1.227" evidence="1"/>
<dbReference type="EMBL" id="AE013218">
    <property type="protein sequence ID" value="AAM67773.1"/>
    <property type="molecule type" value="Genomic_DNA"/>
</dbReference>
<dbReference type="RefSeq" id="WP_011053740.1">
    <property type="nucleotide sequence ID" value="NC_004061.1"/>
</dbReference>
<dbReference type="SMR" id="Q8K9T4"/>
<dbReference type="STRING" id="198804.BUsg_210"/>
<dbReference type="CAZy" id="GT28">
    <property type="family name" value="Glycosyltransferase Family 28"/>
</dbReference>
<dbReference type="GeneID" id="93003677"/>
<dbReference type="KEGG" id="bas:BUsg_210"/>
<dbReference type="eggNOG" id="COG0707">
    <property type="taxonomic scope" value="Bacteria"/>
</dbReference>
<dbReference type="HOGENOM" id="CLU_037404_2_0_6"/>
<dbReference type="UniPathway" id="UPA00219"/>
<dbReference type="Proteomes" id="UP000000416">
    <property type="component" value="Chromosome"/>
</dbReference>
<dbReference type="GO" id="GO:0005886">
    <property type="term" value="C:plasma membrane"/>
    <property type="evidence" value="ECO:0007669"/>
    <property type="project" value="UniProtKB-SubCell"/>
</dbReference>
<dbReference type="GO" id="GO:0051991">
    <property type="term" value="F:UDP-N-acetyl-D-glucosamine:N-acetylmuramoyl-L-alanyl-D-glutamyl-meso-2,6-diaminopimelyl-D-alanyl-D-alanine-diphosphoundecaprenol 4-beta-N-acetylglucosaminlytransferase activity"/>
    <property type="evidence" value="ECO:0007669"/>
    <property type="project" value="RHEA"/>
</dbReference>
<dbReference type="GO" id="GO:0050511">
    <property type="term" value="F:undecaprenyldiphospho-muramoylpentapeptide beta-N-acetylglucosaminyltransferase activity"/>
    <property type="evidence" value="ECO:0007669"/>
    <property type="project" value="UniProtKB-UniRule"/>
</dbReference>
<dbReference type="GO" id="GO:0005975">
    <property type="term" value="P:carbohydrate metabolic process"/>
    <property type="evidence" value="ECO:0007669"/>
    <property type="project" value="InterPro"/>
</dbReference>
<dbReference type="GO" id="GO:0051301">
    <property type="term" value="P:cell division"/>
    <property type="evidence" value="ECO:0007669"/>
    <property type="project" value="UniProtKB-KW"/>
</dbReference>
<dbReference type="GO" id="GO:0071555">
    <property type="term" value="P:cell wall organization"/>
    <property type="evidence" value="ECO:0007669"/>
    <property type="project" value="UniProtKB-KW"/>
</dbReference>
<dbReference type="GO" id="GO:0030259">
    <property type="term" value="P:lipid glycosylation"/>
    <property type="evidence" value="ECO:0007669"/>
    <property type="project" value="UniProtKB-UniRule"/>
</dbReference>
<dbReference type="GO" id="GO:0009252">
    <property type="term" value="P:peptidoglycan biosynthetic process"/>
    <property type="evidence" value="ECO:0007669"/>
    <property type="project" value="UniProtKB-UniRule"/>
</dbReference>
<dbReference type="GO" id="GO:0008360">
    <property type="term" value="P:regulation of cell shape"/>
    <property type="evidence" value="ECO:0007669"/>
    <property type="project" value="UniProtKB-KW"/>
</dbReference>
<dbReference type="CDD" id="cd03785">
    <property type="entry name" value="GT28_MurG"/>
    <property type="match status" value="1"/>
</dbReference>
<dbReference type="Gene3D" id="3.40.50.2000">
    <property type="entry name" value="Glycogen Phosphorylase B"/>
    <property type="match status" value="2"/>
</dbReference>
<dbReference type="HAMAP" id="MF_00033">
    <property type="entry name" value="MurG"/>
    <property type="match status" value="1"/>
</dbReference>
<dbReference type="InterPro" id="IPR006009">
    <property type="entry name" value="GlcNAc_MurG"/>
</dbReference>
<dbReference type="InterPro" id="IPR007235">
    <property type="entry name" value="Glyco_trans_28_C"/>
</dbReference>
<dbReference type="InterPro" id="IPR004276">
    <property type="entry name" value="GlycoTrans_28_N"/>
</dbReference>
<dbReference type="NCBIfam" id="TIGR01133">
    <property type="entry name" value="murG"/>
    <property type="match status" value="1"/>
</dbReference>
<dbReference type="PANTHER" id="PTHR21015:SF22">
    <property type="entry name" value="GLYCOSYLTRANSFERASE"/>
    <property type="match status" value="1"/>
</dbReference>
<dbReference type="PANTHER" id="PTHR21015">
    <property type="entry name" value="UDP-N-ACETYLGLUCOSAMINE--N-ACETYLMURAMYL-(PENTAPEPTIDE) PYROPHOSPHORYL-UNDECAPRENOL N-ACETYLGLUCOSAMINE TRANSFERASE 1"/>
    <property type="match status" value="1"/>
</dbReference>
<dbReference type="Pfam" id="PF04101">
    <property type="entry name" value="Glyco_tran_28_C"/>
    <property type="match status" value="1"/>
</dbReference>
<dbReference type="Pfam" id="PF03033">
    <property type="entry name" value="Glyco_transf_28"/>
    <property type="match status" value="1"/>
</dbReference>
<dbReference type="SUPFAM" id="SSF53756">
    <property type="entry name" value="UDP-Glycosyltransferase/glycogen phosphorylase"/>
    <property type="match status" value="1"/>
</dbReference>
<name>MURG_BUCAP</name>
<reference key="1">
    <citation type="journal article" date="2002" name="Science">
        <title>50 million years of genomic stasis in endosymbiotic bacteria.</title>
        <authorList>
            <person name="Tamas I."/>
            <person name="Klasson L."/>
            <person name="Canbaeck B."/>
            <person name="Naeslund A.K."/>
            <person name="Eriksson A.-S."/>
            <person name="Wernegreen J.J."/>
            <person name="Sandstroem J.P."/>
            <person name="Moran N.A."/>
            <person name="Andersson S.G.E."/>
        </authorList>
    </citation>
    <scope>NUCLEOTIDE SEQUENCE [LARGE SCALE GENOMIC DNA]</scope>
    <source>
        <strain>Sg</strain>
    </source>
</reference>
<sequence length="354" mass="39559">MNSKRIIILAGGSGGHVFPGLTIAKHLIKKGWDINWIGTKNKIESEIIPKCNIKIHFIKIQGLRNSSLKNLIMTPINVLNSYLQVRKIIKNWIPDIILGMGGYVSGPGGLAAWSCKIPFILHEQNKIAGITNKLLSKISTKNMQAFSGTLLNAEIVGNPIRKNIIDIPPPIKRFKNRKGPLRILIIGGSQGASIFNKILPKISFFLQEKAIIWHQSGNNDLQKTRKKYKKYSTYKHIVSSFIKNIAEAYEWADIIISRSGALTVSEITVVGLGAIFIPYPHKDKQQYLNAEDLENNGAAKIIEQSMFTAELIIKILNSLNREKLFIMAKKAYSLGIRNSTSKISKIIHDVSNKI</sequence>
<comment type="function">
    <text evidence="1">Cell wall formation. Catalyzes the transfer of a GlcNAc subunit on undecaprenyl-pyrophosphoryl-MurNAc-pentapeptide (lipid intermediate I) to form undecaprenyl-pyrophosphoryl-MurNAc-(pentapeptide)GlcNAc (lipid intermediate II).</text>
</comment>
<comment type="catalytic activity">
    <reaction evidence="1">
        <text>di-trans,octa-cis-undecaprenyl diphospho-N-acetyl-alpha-D-muramoyl-L-alanyl-D-glutamyl-meso-2,6-diaminopimeloyl-D-alanyl-D-alanine + UDP-N-acetyl-alpha-D-glucosamine = di-trans,octa-cis-undecaprenyl diphospho-[N-acetyl-alpha-D-glucosaminyl-(1-&gt;4)]-N-acetyl-alpha-D-muramoyl-L-alanyl-D-glutamyl-meso-2,6-diaminopimeloyl-D-alanyl-D-alanine + UDP + H(+)</text>
        <dbReference type="Rhea" id="RHEA:31227"/>
        <dbReference type="ChEBI" id="CHEBI:15378"/>
        <dbReference type="ChEBI" id="CHEBI:57705"/>
        <dbReference type="ChEBI" id="CHEBI:58223"/>
        <dbReference type="ChEBI" id="CHEBI:61387"/>
        <dbReference type="ChEBI" id="CHEBI:61388"/>
        <dbReference type="EC" id="2.4.1.227"/>
    </reaction>
</comment>
<comment type="pathway">
    <text evidence="1">Cell wall biogenesis; peptidoglycan biosynthesis.</text>
</comment>
<comment type="subcellular location">
    <subcellularLocation>
        <location evidence="1">Cell inner membrane</location>
        <topology evidence="1">Peripheral membrane protein</topology>
        <orientation evidence="1">Cytoplasmic side</orientation>
    </subcellularLocation>
</comment>
<comment type="similarity">
    <text evidence="1">Belongs to the glycosyltransferase 28 family. MurG subfamily.</text>
</comment>
<evidence type="ECO:0000255" key="1">
    <source>
        <dbReference type="HAMAP-Rule" id="MF_00033"/>
    </source>
</evidence>
<keyword id="KW-0131">Cell cycle</keyword>
<keyword id="KW-0132">Cell division</keyword>
<keyword id="KW-0997">Cell inner membrane</keyword>
<keyword id="KW-1003">Cell membrane</keyword>
<keyword id="KW-0133">Cell shape</keyword>
<keyword id="KW-0961">Cell wall biogenesis/degradation</keyword>
<keyword id="KW-0328">Glycosyltransferase</keyword>
<keyword id="KW-0472">Membrane</keyword>
<keyword id="KW-0573">Peptidoglycan synthesis</keyword>
<keyword id="KW-0808">Transferase</keyword>
<accession>Q8K9T4</accession>
<protein>
    <recommendedName>
        <fullName evidence="1">UDP-N-acetylglucosamine--N-acetylmuramyl-(pentapeptide) pyrophosphoryl-undecaprenol N-acetylglucosamine transferase</fullName>
        <ecNumber evidence="1">2.4.1.227</ecNumber>
    </recommendedName>
    <alternativeName>
        <fullName evidence="1">Undecaprenyl-PP-MurNAc-pentapeptide-UDPGlcNAc GlcNAc transferase</fullName>
    </alternativeName>
</protein>